<proteinExistence type="inferred from homology"/>
<sequence>MKFILFALLVSAGSWYGWKQLHSQDAVSKPIRYVKIEGAFQYTNKETLKRILTPEMKRGFYHVDMDAIHQLISQLPLVAAVDVNRVWPDAVHIKITEQKPIVRWGDKAVLNKQGEVLIPDDIDEFKNLPLITGPEGQEKKLLEIMKGVYIVLKDKSMQLAEFHVNDRRAWRIKLASGLEMQLGRKAPLENMQRFLKTMDLLGEEQVAMMASVDTRYPNGYAVTWKPDTPEIDWKAIAENYKNVMKERRI</sequence>
<feature type="chain" id="PRO_0000414676" description="Cell division protein FtsQ">
    <location>
        <begin position="1"/>
        <end position="249"/>
    </location>
</feature>
<feature type="topological domain" description="Cytoplasmic" evidence="1">
    <location>
        <begin position="1"/>
        <end position="6"/>
    </location>
</feature>
<feature type="transmembrane region" description="Helical" evidence="1">
    <location>
        <begin position="7"/>
        <end position="23"/>
    </location>
</feature>
<feature type="topological domain" description="Periplasmic" evidence="1">
    <location>
        <begin position="24"/>
        <end position="249"/>
    </location>
</feature>
<feature type="domain" description="POTRA" evidence="2">
    <location>
        <begin position="29"/>
        <end position="98"/>
    </location>
</feature>
<protein>
    <recommendedName>
        <fullName evidence="1">Cell division protein FtsQ</fullName>
    </recommendedName>
</protein>
<reference key="1">
    <citation type="submission" date="2011-05" db="EMBL/GenBank/DDBJ databases">
        <title>Complete sequence of Methylomonas methanica MC09.</title>
        <authorList>
            <person name="Lucas S."/>
            <person name="Han J."/>
            <person name="Lapidus A."/>
            <person name="Cheng J.-F."/>
            <person name="Goodwin L."/>
            <person name="Pitluck S."/>
            <person name="Peters L."/>
            <person name="Mikhailova N."/>
            <person name="Teshima H."/>
            <person name="Han C."/>
            <person name="Tapia R."/>
            <person name="Land M."/>
            <person name="Hauser L."/>
            <person name="Kyrpides N."/>
            <person name="Ivanova N."/>
            <person name="Pagani I."/>
            <person name="Stein L."/>
            <person name="Woyke T."/>
        </authorList>
    </citation>
    <scope>NUCLEOTIDE SEQUENCE [LARGE SCALE GENOMIC DNA]</scope>
    <source>
        <strain>DSM 25384 / MC09</strain>
    </source>
</reference>
<name>FTSQ_METMM</name>
<comment type="function">
    <text evidence="1">Essential cell division protein. May link together the upstream cell division proteins, which are predominantly cytoplasmic, with the downstream cell division proteins, which are predominantly periplasmic. May control correct divisome assembly.</text>
</comment>
<comment type="subunit">
    <text evidence="1">Part of a complex composed of FtsB, FtsL and FtsQ.</text>
</comment>
<comment type="subcellular location">
    <subcellularLocation>
        <location evidence="1">Cell inner membrane</location>
        <topology evidence="1">Single-pass type II membrane protein</topology>
    </subcellularLocation>
    <text evidence="1">Localizes to the division septum.</text>
</comment>
<comment type="similarity">
    <text evidence="1">Belongs to the FtsQ/DivIB family. FtsQ subfamily.</text>
</comment>
<organism>
    <name type="scientific">Methylomonas methanica (strain DSM 25384 / MC09)</name>
    <dbReference type="NCBI Taxonomy" id="857087"/>
    <lineage>
        <taxon>Bacteria</taxon>
        <taxon>Pseudomonadati</taxon>
        <taxon>Pseudomonadota</taxon>
        <taxon>Gammaproteobacteria</taxon>
        <taxon>Methylococcales</taxon>
        <taxon>Methylococcaceae</taxon>
        <taxon>Methylomonas</taxon>
    </lineage>
</organism>
<keyword id="KW-0131">Cell cycle</keyword>
<keyword id="KW-0132">Cell division</keyword>
<keyword id="KW-0997">Cell inner membrane</keyword>
<keyword id="KW-1003">Cell membrane</keyword>
<keyword id="KW-0472">Membrane</keyword>
<keyword id="KW-1185">Reference proteome</keyword>
<keyword id="KW-0812">Transmembrane</keyword>
<keyword id="KW-1133">Transmembrane helix</keyword>
<dbReference type="EMBL" id="CP002738">
    <property type="protein sequence ID" value="AEF98704.1"/>
    <property type="molecule type" value="Genomic_DNA"/>
</dbReference>
<dbReference type="SMR" id="F9ZZP5"/>
<dbReference type="STRING" id="857087.Metme_0255"/>
<dbReference type="KEGG" id="mmt:Metme_0255"/>
<dbReference type="eggNOG" id="COG1589">
    <property type="taxonomic scope" value="Bacteria"/>
</dbReference>
<dbReference type="HOGENOM" id="CLU_064041_1_1_6"/>
<dbReference type="OrthoDB" id="9790370at2"/>
<dbReference type="Proteomes" id="UP000008888">
    <property type="component" value="Chromosome"/>
</dbReference>
<dbReference type="GO" id="GO:0032153">
    <property type="term" value="C:cell division site"/>
    <property type="evidence" value="ECO:0007669"/>
    <property type="project" value="UniProtKB-UniRule"/>
</dbReference>
<dbReference type="GO" id="GO:0005886">
    <property type="term" value="C:plasma membrane"/>
    <property type="evidence" value="ECO:0007669"/>
    <property type="project" value="UniProtKB-SubCell"/>
</dbReference>
<dbReference type="GO" id="GO:0090529">
    <property type="term" value="P:cell septum assembly"/>
    <property type="evidence" value="ECO:0007669"/>
    <property type="project" value="InterPro"/>
</dbReference>
<dbReference type="GO" id="GO:0043093">
    <property type="term" value="P:FtsZ-dependent cytokinesis"/>
    <property type="evidence" value="ECO:0007669"/>
    <property type="project" value="UniProtKB-UniRule"/>
</dbReference>
<dbReference type="Gene3D" id="3.40.50.11690">
    <property type="entry name" value="Cell division protein FtsQ/DivIB"/>
    <property type="match status" value="1"/>
</dbReference>
<dbReference type="Gene3D" id="3.10.20.310">
    <property type="entry name" value="membrane protein fhac"/>
    <property type="match status" value="1"/>
</dbReference>
<dbReference type="HAMAP" id="MF_00911">
    <property type="entry name" value="FtsQ_subfam"/>
    <property type="match status" value="1"/>
</dbReference>
<dbReference type="InterPro" id="IPR005548">
    <property type="entry name" value="Cell_div_FtsQ/DivIB_C"/>
</dbReference>
<dbReference type="InterPro" id="IPR026579">
    <property type="entry name" value="FtsQ"/>
</dbReference>
<dbReference type="InterPro" id="IPR045335">
    <property type="entry name" value="FtsQ_C_sf"/>
</dbReference>
<dbReference type="InterPro" id="IPR034746">
    <property type="entry name" value="POTRA"/>
</dbReference>
<dbReference type="InterPro" id="IPR013685">
    <property type="entry name" value="POTRA_FtsQ_type"/>
</dbReference>
<dbReference type="PANTHER" id="PTHR35851">
    <property type="entry name" value="CELL DIVISION PROTEIN FTSQ"/>
    <property type="match status" value="1"/>
</dbReference>
<dbReference type="PANTHER" id="PTHR35851:SF1">
    <property type="entry name" value="CELL DIVISION PROTEIN FTSQ"/>
    <property type="match status" value="1"/>
</dbReference>
<dbReference type="Pfam" id="PF03799">
    <property type="entry name" value="FtsQ_DivIB_C"/>
    <property type="match status" value="1"/>
</dbReference>
<dbReference type="Pfam" id="PF08478">
    <property type="entry name" value="POTRA_1"/>
    <property type="match status" value="1"/>
</dbReference>
<dbReference type="PROSITE" id="PS51779">
    <property type="entry name" value="POTRA"/>
    <property type="match status" value="1"/>
</dbReference>
<accession>F9ZZP5</accession>
<gene>
    <name evidence="1" type="primary">ftsQ</name>
    <name type="ordered locus">Metme_0255</name>
</gene>
<evidence type="ECO:0000255" key="1">
    <source>
        <dbReference type="HAMAP-Rule" id="MF_00911"/>
    </source>
</evidence>
<evidence type="ECO:0000255" key="2">
    <source>
        <dbReference type="PROSITE-ProRule" id="PRU01115"/>
    </source>
</evidence>